<accession>Q5BCL0</accession>
<accession>C8VP19</accession>
<reference key="1">
    <citation type="journal article" date="2005" name="Nature">
        <title>Sequencing of Aspergillus nidulans and comparative analysis with A. fumigatus and A. oryzae.</title>
        <authorList>
            <person name="Galagan J.E."/>
            <person name="Calvo S.E."/>
            <person name="Cuomo C."/>
            <person name="Ma L.-J."/>
            <person name="Wortman J.R."/>
            <person name="Batzoglou S."/>
            <person name="Lee S.-I."/>
            <person name="Bastuerkmen M."/>
            <person name="Spevak C.C."/>
            <person name="Clutterbuck J."/>
            <person name="Kapitonov V."/>
            <person name="Jurka J."/>
            <person name="Scazzocchio C."/>
            <person name="Farman M.L."/>
            <person name="Butler J."/>
            <person name="Purcell S."/>
            <person name="Harris S."/>
            <person name="Braus G.H."/>
            <person name="Draht O."/>
            <person name="Busch S."/>
            <person name="D'Enfert C."/>
            <person name="Bouchier C."/>
            <person name="Goldman G.H."/>
            <person name="Bell-Pedersen D."/>
            <person name="Griffiths-Jones S."/>
            <person name="Doonan J.H."/>
            <person name="Yu J."/>
            <person name="Vienken K."/>
            <person name="Pain A."/>
            <person name="Freitag M."/>
            <person name="Selker E.U."/>
            <person name="Archer D.B."/>
            <person name="Penalva M.A."/>
            <person name="Oakley B.R."/>
            <person name="Momany M."/>
            <person name="Tanaka T."/>
            <person name="Kumagai T."/>
            <person name="Asai K."/>
            <person name="Machida M."/>
            <person name="Nierman W.C."/>
            <person name="Denning D.W."/>
            <person name="Caddick M.X."/>
            <person name="Hynes M."/>
            <person name="Paoletti M."/>
            <person name="Fischer R."/>
            <person name="Miller B.L."/>
            <person name="Dyer P.S."/>
            <person name="Sachs M.S."/>
            <person name="Osmani S.A."/>
            <person name="Birren B.W."/>
        </authorList>
    </citation>
    <scope>NUCLEOTIDE SEQUENCE [LARGE SCALE GENOMIC DNA]</scope>
    <source>
        <strain>FGSC A4 / ATCC 38163 / CBS 112.46 / NRRL 194 / M139</strain>
    </source>
</reference>
<reference key="2">
    <citation type="journal article" date="2009" name="Fungal Genet. Biol.">
        <title>The 2008 update of the Aspergillus nidulans genome annotation: a community effort.</title>
        <authorList>
            <person name="Wortman J.R."/>
            <person name="Gilsenan J.M."/>
            <person name="Joardar V."/>
            <person name="Deegan J."/>
            <person name="Clutterbuck J."/>
            <person name="Andersen M.R."/>
            <person name="Archer D."/>
            <person name="Bencina M."/>
            <person name="Braus G."/>
            <person name="Coutinho P."/>
            <person name="von Dohren H."/>
            <person name="Doonan J."/>
            <person name="Driessen A.J."/>
            <person name="Durek P."/>
            <person name="Espeso E."/>
            <person name="Fekete E."/>
            <person name="Flipphi M."/>
            <person name="Estrada C.G."/>
            <person name="Geysens S."/>
            <person name="Goldman G."/>
            <person name="de Groot P.W."/>
            <person name="Hansen K."/>
            <person name="Harris S.D."/>
            <person name="Heinekamp T."/>
            <person name="Helmstaedt K."/>
            <person name="Henrissat B."/>
            <person name="Hofmann G."/>
            <person name="Homan T."/>
            <person name="Horio T."/>
            <person name="Horiuchi H."/>
            <person name="James S."/>
            <person name="Jones M."/>
            <person name="Karaffa L."/>
            <person name="Karanyi Z."/>
            <person name="Kato M."/>
            <person name="Keller N."/>
            <person name="Kelly D.E."/>
            <person name="Kiel J.A."/>
            <person name="Kim J.M."/>
            <person name="van der Klei I.J."/>
            <person name="Klis F.M."/>
            <person name="Kovalchuk A."/>
            <person name="Krasevec N."/>
            <person name="Kubicek C.P."/>
            <person name="Liu B."/>
            <person name="Maccabe A."/>
            <person name="Meyer V."/>
            <person name="Mirabito P."/>
            <person name="Miskei M."/>
            <person name="Mos M."/>
            <person name="Mullins J."/>
            <person name="Nelson D.R."/>
            <person name="Nielsen J."/>
            <person name="Oakley B.R."/>
            <person name="Osmani S.A."/>
            <person name="Pakula T."/>
            <person name="Paszewski A."/>
            <person name="Paulsen I."/>
            <person name="Pilsyk S."/>
            <person name="Pocsi I."/>
            <person name="Punt P.J."/>
            <person name="Ram A.F."/>
            <person name="Ren Q."/>
            <person name="Robellet X."/>
            <person name="Robson G."/>
            <person name="Seiboth B."/>
            <person name="van Solingen P."/>
            <person name="Specht T."/>
            <person name="Sun J."/>
            <person name="Taheri-Talesh N."/>
            <person name="Takeshita N."/>
            <person name="Ussery D."/>
            <person name="vanKuyk P.A."/>
            <person name="Visser H."/>
            <person name="van de Vondervoort P.J."/>
            <person name="de Vries R.P."/>
            <person name="Walton J."/>
            <person name="Xiang X."/>
            <person name="Xiong Y."/>
            <person name="Zeng A.P."/>
            <person name="Brandt B.W."/>
            <person name="Cornell M.J."/>
            <person name="van den Hondel C.A."/>
            <person name="Visser J."/>
            <person name="Oliver S.G."/>
            <person name="Turner G."/>
        </authorList>
    </citation>
    <scope>GENOME REANNOTATION</scope>
    <source>
        <strain>FGSC A4 / ATCC 38163 / CBS 112.46 / NRRL 194 / M139</strain>
    </source>
</reference>
<evidence type="ECO:0000250" key="1"/>
<evidence type="ECO:0000305" key="2"/>
<gene>
    <name type="primary">med8</name>
    <name type="ORF">AN1720</name>
</gene>
<organism>
    <name type="scientific">Emericella nidulans (strain FGSC A4 / ATCC 38163 / CBS 112.46 / NRRL 194 / M139)</name>
    <name type="common">Aspergillus nidulans</name>
    <dbReference type="NCBI Taxonomy" id="227321"/>
    <lineage>
        <taxon>Eukaryota</taxon>
        <taxon>Fungi</taxon>
        <taxon>Dikarya</taxon>
        <taxon>Ascomycota</taxon>
        <taxon>Pezizomycotina</taxon>
        <taxon>Eurotiomycetes</taxon>
        <taxon>Eurotiomycetidae</taxon>
        <taxon>Eurotiales</taxon>
        <taxon>Aspergillaceae</taxon>
        <taxon>Aspergillus</taxon>
        <taxon>Aspergillus subgen. Nidulantes</taxon>
    </lineage>
</organism>
<name>MED8_EMENI</name>
<comment type="function">
    <text evidence="1">Component of the Mediator complex, a coactivator involved in the regulated transcription of nearly all RNA polymerase II-dependent genes. Mediator functions as a bridge to convey information from gene-specific regulatory proteins to the basal RNA polymerase II transcription machinery. Mediator is recruited to promoters by direct interactions with regulatory proteins and serves as a scaffold for the assembly of a functional preinitiation complex with RNA polymerase II and the general transcription factors (By similarity).</text>
</comment>
<comment type="subunit">
    <text evidence="1">Component of the Mediator complex.</text>
</comment>
<comment type="subcellular location">
    <subcellularLocation>
        <location evidence="2">Nucleus</location>
    </subcellularLocation>
</comment>
<comment type="similarity">
    <text evidence="2">Belongs to the Mediator complex subunit 8 family.</text>
</comment>
<proteinExistence type="inferred from homology"/>
<keyword id="KW-0010">Activator</keyword>
<keyword id="KW-0539">Nucleus</keyword>
<keyword id="KW-1185">Reference proteome</keyword>
<keyword id="KW-0804">Transcription</keyword>
<keyword id="KW-0805">Transcription regulation</keyword>
<protein>
    <recommendedName>
        <fullName>Mediator of RNA polymerase II transcription subunit 8</fullName>
    </recommendedName>
    <alternativeName>
        <fullName>Mediator complex subunit 8</fullName>
    </alternativeName>
</protein>
<dbReference type="EMBL" id="AACD01000027">
    <property type="protein sequence ID" value="EAA64006.1"/>
    <property type="molecule type" value="Genomic_DNA"/>
</dbReference>
<dbReference type="EMBL" id="BN001307">
    <property type="protein sequence ID" value="CBF85431.1"/>
    <property type="molecule type" value="Genomic_DNA"/>
</dbReference>
<dbReference type="RefSeq" id="XP_659324.1">
    <property type="nucleotide sequence ID" value="XM_654232.1"/>
</dbReference>
<dbReference type="SMR" id="Q5BCL0"/>
<dbReference type="STRING" id="227321.Q5BCL0"/>
<dbReference type="EnsemblFungi" id="CBF85431">
    <property type="protein sequence ID" value="CBF85431"/>
    <property type="gene ID" value="ANIA_01720"/>
</dbReference>
<dbReference type="KEGG" id="ani:ANIA_01720"/>
<dbReference type="VEuPathDB" id="FungiDB:AN1720"/>
<dbReference type="eggNOG" id="ENOG502S8U1">
    <property type="taxonomic scope" value="Eukaryota"/>
</dbReference>
<dbReference type="HOGENOM" id="CLU_074399_1_0_1"/>
<dbReference type="InParanoid" id="Q5BCL0"/>
<dbReference type="OMA" id="WAPIEAN"/>
<dbReference type="OrthoDB" id="5329317at2759"/>
<dbReference type="Proteomes" id="UP000000560">
    <property type="component" value="Chromosome VII"/>
</dbReference>
<dbReference type="GO" id="GO:0070847">
    <property type="term" value="C:core mediator complex"/>
    <property type="evidence" value="ECO:0000318"/>
    <property type="project" value="GO_Central"/>
</dbReference>
<dbReference type="GO" id="GO:0016592">
    <property type="term" value="C:mediator complex"/>
    <property type="evidence" value="ECO:0000318"/>
    <property type="project" value="GO_Central"/>
</dbReference>
<dbReference type="GO" id="GO:0000978">
    <property type="term" value="F:RNA polymerase II cis-regulatory region sequence-specific DNA binding"/>
    <property type="evidence" value="ECO:0000318"/>
    <property type="project" value="GO_Central"/>
</dbReference>
<dbReference type="GO" id="GO:0003712">
    <property type="term" value="F:transcription coregulator activity"/>
    <property type="evidence" value="ECO:0000318"/>
    <property type="project" value="GO_Central"/>
</dbReference>
<dbReference type="GO" id="GO:0006357">
    <property type="term" value="P:regulation of transcription by RNA polymerase II"/>
    <property type="evidence" value="ECO:0000318"/>
    <property type="project" value="GO_Central"/>
</dbReference>
<dbReference type="FunFam" id="1.20.58.1710:FF:000002">
    <property type="entry name" value="Mediator of RNA polymerase II transcription subunit 8"/>
    <property type="match status" value="1"/>
</dbReference>
<dbReference type="Gene3D" id="1.20.58.1710">
    <property type="match status" value="1"/>
</dbReference>
<dbReference type="Gene3D" id="6.10.250.2610">
    <property type="match status" value="1"/>
</dbReference>
<dbReference type="InterPro" id="IPR019364">
    <property type="entry name" value="Mediatior_Med8_fun/met"/>
</dbReference>
<dbReference type="PANTHER" id="PTHR13074">
    <property type="entry name" value="MEDIATOR OF RNA POLYMERASE II TRANSCRIPTION SUBUNIT 8"/>
    <property type="match status" value="1"/>
</dbReference>
<dbReference type="PANTHER" id="PTHR13074:SF9">
    <property type="entry name" value="MEDIATOR OF RNA POLYMERASE II TRANSCRIPTION SUBUNIT 8"/>
    <property type="match status" value="1"/>
</dbReference>
<dbReference type="Pfam" id="PF10232">
    <property type="entry name" value="Med8"/>
    <property type="match status" value="1"/>
</dbReference>
<feature type="chain" id="PRO_0000304543" description="Mediator of RNA polymerase II transcription subunit 8">
    <location>
        <begin position="1"/>
        <end position="260"/>
    </location>
</feature>
<sequence length="260" mass="28045">MTTLSPDHLKTLEQSRQRLIQLTHSLGSLITSLNQSDPLPTWSSLQTQASIISNNLQSISTHLSENHELLRSISALPAPEFPTKTHANTLEQLLRTKLDPRVEDWVSRGRKADNSAIQGSSGSTGMFSTLPSASAAGMNAGVVGAGAGGRLSEDDLAALWEWAPVEANSEARRRNWGGNFTLEEKERGIQQVVAELGLKRVLEDDDESEEEDEEMDVGFGGRIDGAPDNAGAAAGEHALPLVPINEILRYMTTGVMPAVR</sequence>